<gene>
    <name type="primary">ybdK</name>
    <name type="ordered locus">b0581</name>
    <name type="ordered locus">JW0570</name>
</gene>
<name>GCS2_ECOLI</name>
<proteinExistence type="evidence at protein level"/>
<reference key="1">
    <citation type="journal article" date="1996" name="DNA Res.">
        <title>A 718-kb DNA sequence of the Escherichia coli K-12 genome corresponding to the 12.7-28.0 min region on the linkage map.</title>
        <authorList>
            <person name="Oshima T."/>
            <person name="Aiba H."/>
            <person name="Baba T."/>
            <person name="Fujita K."/>
            <person name="Hayashi K."/>
            <person name="Honjo A."/>
            <person name="Ikemoto K."/>
            <person name="Inada T."/>
            <person name="Itoh T."/>
            <person name="Kajihara M."/>
            <person name="Kanai K."/>
            <person name="Kashimoto K."/>
            <person name="Kimura S."/>
            <person name="Kitagawa M."/>
            <person name="Makino K."/>
            <person name="Masuda S."/>
            <person name="Miki T."/>
            <person name="Mizobuchi K."/>
            <person name="Mori H."/>
            <person name="Motomura K."/>
            <person name="Nakamura Y."/>
            <person name="Nashimoto H."/>
            <person name="Nishio Y."/>
            <person name="Saito N."/>
            <person name="Sampei G."/>
            <person name="Seki Y."/>
            <person name="Tagami H."/>
            <person name="Takemoto K."/>
            <person name="Wada C."/>
            <person name="Yamamoto Y."/>
            <person name="Yano M."/>
            <person name="Horiuchi T."/>
        </authorList>
    </citation>
    <scope>NUCLEOTIDE SEQUENCE [LARGE SCALE GENOMIC DNA]</scope>
    <source>
        <strain>K12 / W3110 / ATCC 27325 / DSM 5911</strain>
    </source>
</reference>
<reference key="2">
    <citation type="submission" date="1997-01" db="EMBL/GenBank/DDBJ databases">
        <title>Sequence of minutes 4-25 of Escherichia coli.</title>
        <authorList>
            <person name="Chung E."/>
            <person name="Allen E."/>
            <person name="Araujo R."/>
            <person name="Aparicio A.M."/>
            <person name="Davis K."/>
            <person name="Duncan M."/>
            <person name="Federspiel N."/>
            <person name="Hyman R."/>
            <person name="Kalman S."/>
            <person name="Komp C."/>
            <person name="Kurdi O."/>
            <person name="Lew H."/>
            <person name="Lin D."/>
            <person name="Namath A."/>
            <person name="Oefner P."/>
            <person name="Roberts D."/>
            <person name="Schramm S."/>
            <person name="Davis R.W."/>
        </authorList>
    </citation>
    <scope>NUCLEOTIDE SEQUENCE [LARGE SCALE GENOMIC DNA]</scope>
    <source>
        <strain>K12 / MG1655 / ATCC 47076</strain>
    </source>
</reference>
<reference key="3">
    <citation type="journal article" date="1997" name="Science">
        <title>The complete genome sequence of Escherichia coli K-12.</title>
        <authorList>
            <person name="Blattner F.R."/>
            <person name="Plunkett G. III"/>
            <person name="Bloch C.A."/>
            <person name="Perna N.T."/>
            <person name="Burland V."/>
            <person name="Riley M."/>
            <person name="Collado-Vides J."/>
            <person name="Glasner J.D."/>
            <person name="Rode C.K."/>
            <person name="Mayhew G.F."/>
            <person name="Gregor J."/>
            <person name="Davis N.W."/>
            <person name="Kirkpatrick H.A."/>
            <person name="Goeden M.A."/>
            <person name="Rose D.J."/>
            <person name="Mau B."/>
            <person name="Shao Y."/>
        </authorList>
    </citation>
    <scope>NUCLEOTIDE SEQUENCE [LARGE SCALE GENOMIC DNA]</scope>
    <source>
        <strain>K12 / MG1655 / ATCC 47076</strain>
    </source>
</reference>
<reference key="4">
    <citation type="journal article" date="2006" name="Mol. Syst. Biol.">
        <title>Highly accurate genome sequences of Escherichia coli K-12 strains MG1655 and W3110.</title>
        <authorList>
            <person name="Hayashi K."/>
            <person name="Morooka N."/>
            <person name="Yamamoto Y."/>
            <person name="Fujita K."/>
            <person name="Isono K."/>
            <person name="Choi S."/>
            <person name="Ohtsubo E."/>
            <person name="Baba T."/>
            <person name="Wanner B.L."/>
            <person name="Mori H."/>
            <person name="Horiuchi T."/>
        </authorList>
    </citation>
    <scope>NUCLEOTIDE SEQUENCE [LARGE SCALE GENOMIC DNA]</scope>
    <source>
        <strain>K12 / W3110 / ATCC 27325 / DSM 5911</strain>
    </source>
</reference>
<reference key="5">
    <citation type="journal article" date="2004" name="Proteins">
        <title>YbdK is a carboxylate-amine ligase with a gamma-glutamyl:cysteine ligase activity: crystal structure and enzymatic assays.</title>
        <authorList>
            <person name="Lehmann C."/>
            <person name="Doseeva V."/>
            <person name="Pullalarevu S."/>
            <person name="Krajewski W."/>
            <person name="Howard A."/>
            <person name="Herzberg O."/>
        </authorList>
    </citation>
    <scope>X-RAY CRYSTALLOGRAPHY (2.15 ANGSTROMS)</scope>
    <scope>FUNCTION</scope>
    <scope>SUBUNIT</scope>
    <source>
        <strain>K12</strain>
    </source>
</reference>
<evidence type="ECO:0000255" key="1">
    <source>
        <dbReference type="HAMAP-Rule" id="MF_01609"/>
    </source>
</evidence>
<evidence type="ECO:0000269" key="2">
    <source>
    </source>
</evidence>
<evidence type="ECO:0007829" key="3">
    <source>
        <dbReference type="PDB" id="1R8G"/>
    </source>
</evidence>
<feature type="chain" id="PRO_0000218196" description="Putative glutamate--cysteine ligase 2">
    <location>
        <begin position="1"/>
        <end position="372"/>
    </location>
</feature>
<feature type="strand" evidence="3">
    <location>
        <begin position="14"/>
        <end position="24"/>
    </location>
</feature>
<feature type="turn" evidence="3">
    <location>
        <begin position="25"/>
        <end position="28"/>
    </location>
</feature>
<feature type="helix" evidence="3">
    <location>
        <begin position="35"/>
        <end position="38"/>
    </location>
</feature>
<feature type="strand" evidence="3">
    <location>
        <begin position="41"/>
        <end position="44"/>
    </location>
</feature>
<feature type="strand" evidence="3">
    <location>
        <begin position="46"/>
        <end position="52"/>
    </location>
</feature>
<feature type="strand" evidence="3">
    <location>
        <begin position="54"/>
        <end position="62"/>
    </location>
</feature>
<feature type="strand" evidence="3">
    <location>
        <begin position="65"/>
        <end position="68"/>
    </location>
</feature>
<feature type="helix" evidence="3">
    <location>
        <begin position="69"/>
        <end position="89"/>
    </location>
</feature>
<feature type="strand" evidence="3">
    <location>
        <begin position="93"/>
        <end position="95"/>
    </location>
</feature>
<feature type="helix" evidence="3">
    <location>
        <begin position="124"/>
        <end position="127"/>
    </location>
</feature>
<feature type="strand" evidence="3">
    <location>
        <begin position="134"/>
        <end position="140"/>
    </location>
</feature>
<feature type="helix" evidence="3">
    <location>
        <begin position="144"/>
        <end position="155"/>
    </location>
</feature>
<feature type="helix" evidence="3">
    <location>
        <begin position="158"/>
        <end position="165"/>
    </location>
</feature>
<feature type="helix" evidence="3">
    <location>
        <begin position="182"/>
        <end position="186"/>
    </location>
</feature>
<feature type="helix" evidence="3">
    <location>
        <begin position="201"/>
        <end position="211"/>
    </location>
</feature>
<feature type="strand" evidence="3">
    <location>
        <begin position="214"/>
        <end position="216"/>
    </location>
</feature>
<feature type="helix" evidence="3">
    <location>
        <begin position="220"/>
        <end position="222"/>
    </location>
</feature>
<feature type="strand" evidence="3">
    <location>
        <begin position="226"/>
        <end position="230"/>
    </location>
</feature>
<feature type="turn" evidence="3">
    <location>
        <begin position="231"/>
        <end position="234"/>
    </location>
</feature>
<feature type="strand" evidence="3">
    <location>
        <begin position="235"/>
        <end position="242"/>
    </location>
</feature>
<feature type="helix" evidence="3">
    <location>
        <begin position="247"/>
        <end position="267"/>
    </location>
</feature>
<feature type="helix" evidence="3">
    <location>
        <begin position="274"/>
        <end position="277"/>
    </location>
</feature>
<feature type="helix" evidence="3">
    <location>
        <begin position="280"/>
        <end position="290"/>
    </location>
</feature>
<feature type="helix" evidence="3">
    <location>
        <begin position="291"/>
        <end position="293"/>
    </location>
</feature>
<feature type="strand" evidence="3">
    <location>
        <begin position="294"/>
        <end position="297"/>
    </location>
</feature>
<feature type="turn" evidence="3">
    <location>
        <begin position="299"/>
        <end position="301"/>
    </location>
</feature>
<feature type="strand" evidence="3">
    <location>
        <begin position="304"/>
        <end position="306"/>
    </location>
</feature>
<feature type="helix" evidence="3">
    <location>
        <begin position="307"/>
        <end position="317"/>
    </location>
</feature>
<feature type="helix" evidence="3">
    <location>
        <begin position="319"/>
        <end position="324"/>
    </location>
</feature>
<feature type="helix" evidence="3">
    <location>
        <begin position="328"/>
        <end position="340"/>
    </location>
</feature>
<feature type="helix" evidence="3">
    <location>
        <begin position="344"/>
        <end position="353"/>
    </location>
</feature>
<feature type="helix" evidence="3">
    <location>
        <begin position="358"/>
        <end position="369"/>
    </location>
</feature>
<organism>
    <name type="scientific">Escherichia coli (strain K12)</name>
    <dbReference type="NCBI Taxonomy" id="83333"/>
    <lineage>
        <taxon>Bacteria</taxon>
        <taxon>Pseudomonadati</taxon>
        <taxon>Pseudomonadota</taxon>
        <taxon>Gammaproteobacteria</taxon>
        <taxon>Enterobacterales</taxon>
        <taxon>Enterobacteriaceae</taxon>
        <taxon>Escherichia</taxon>
    </lineage>
</organism>
<sequence length="372" mass="41688">MPLPDFHVSEPFTLGIELEMQVVNPPGYDLSQDSSMLIDAVKNKITAGEVKHDITESMLELATDVCRDINQAAGQFSAMQKVVLQAATDHHLEICGGGTHPFQKWQRQEVCDNERYQRTLENFGYLIQQATVFGQHVHVGCASGDDAIYLLHGLSRFVPHFIALSAASPYMQGTDTRFASSRPNIFSAFPDNGPMPWVSNWQQFEALFRCLSYTTMIDSIKDLHWDIRPSPHFGTVEVRVMDTPLTLSHAVNMAGLIQATAHWLLTERPFKHQEKDYLLYKFNRFQACRYGLEGVITDPHTGDRRPLTEDTLRLLEKIAPSAHKIGASSAIEALHRQVVSGLNEAQLMRDFVADGGSLIGLVKKHCEIWAGD</sequence>
<dbReference type="EC" id="6.3.2.2" evidence="1"/>
<dbReference type="EMBL" id="U82598">
    <property type="protein sequence ID" value="AAB40779.1"/>
    <property type="molecule type" value="Genomic_DNA"/>
</dbReference>
<dbReference type="EMBL" id="U00096">
    <property type="protein sequence ID" value="AAC73682.1"/>
    <property type="molecule type" value="Genomic_DNA"/>
</dbReference>
<dbReference type="EMBL" id="AP009048">
    <property type="protein sequence ID" value="BAA35221.1"/>
    <property type="molecule type" value="Genomic_DNA"/>
</dbReference>
<dbReference type="PIR" id="C64791">
    <property type="entry name" value="C64791"/>
</dbReference>
<dbReference type="RefSeq" id="NP_415113.1">
    <property type="nucleotide sequence ID" value="NC_000913.3"/>
</dbReference>
<dbReference type="RefSeq" id="WP_001130654.1">
    <property type="nucleotide sequence ID" value="NZ_SSZK01000104.1"/>
</dbReference>
<dbReference type="PDB" id="1R8G">
    <property type="method" value="X-ray"/>
    <property type="resolution" value="2.15 A"/>
    <property type="chains" value="A/B=1-372"/>
</dbReference>
<dbReference type="PDBsum" id="1R8G"/>
<dbReference type="SMR" id="P77213"/>
<dbReference type="BioGRID" id="4260711">
    <property type="interactions" value="18"/>
</dbReference>
<dbReference type="BioGRID" id="851576">
    <property type="interactions" value="1"/>
</dbReference>
<dbReference type="FunCoup" id="P77213">
    <property type="interactions" value="152"/>
</dbReference>
<dbReference type="IntAct" id="P77213">
    <property type="interactions" value="6"/>
</dbReference>
<dbReference type="STRING" id="511145.b0581"/>
<dbReference type="jPOST" id="P77213"/>
<dbReference type="PaxDb" id="511145-b0581"/>
<dbReference type="EnsemblBacteria" id="AAC73682">
    <property type="protein sequence ID" value="AAC73682"/>
    <property type="gene ID" value="b0581"/>
</dbReference>
<dbReference type="GeneID" id="947246"/>
<dbReference type="KEGG" id="ecj:JW0570"/>
<dbReference type="KEGG" id="eco:b0581"/>
<dbReference type="KEGG" id="ecoc:C3026_02885"/>
<dbReference type="PATRIC" id="fig|1411691.4.peg.1693"/>
<dbReference type="EchoBASE" id="EB3408"/>
<dbReference type="eggNOG" id="COG2170">
    <property type="taxonomic scope" value="Bacteria"/>
</dbReference>
<dbReference type="HOGENOM" id="CLU_044848_1_1_6"/>
<dbReference type="InParanoid" id="P77213"/>
<dbReference type="OMA" id="THPFAQW"/>
<dbReference type="OrthoDB" id="9769628at2"/>
<dbReference type="PhylomeDB" id="P77213"/>
<dbReference type="BioCyc" id="EcoCyc:G6326-MONOMER"/>
<dbReference type="BioCyc" id="MetaCyc:G6326-MONOMER"/>
<dbReference type="EvolutionaryTrace" id="P77213"/>
<dbReference type="PRO" id="PR:P77213"/>
<dbReference type="Proteomes" id="UP000000625">
    <property type="component" value="Chromosome"/>
</dbReference>
<dbReference type="GO" id="GO:0005524">
    <property type="term" value="F:ATP binding"/>
    <property type="evidence" value="ECO:0007669"/>
    <property type="project" value="UniProtKB-KW"/>
</dbReference>
<dbReference type="GO" id="GO:0004357">
    <property type="term" value="F:glutamate-cysteine ligase activity"/>
    <property type="evidence" value="ECO:0000314"/>
    <property type="project" value="EcoCyc"/>
</dbReference>
<dbReference type="GO" id="GO:0016879">
    <property type="term" value="F:ligase activity, forming carbon-nitrogen bonds"/>
    <property type="evidence" value="ECO:0000318"/>
    <property type="project" value="GO_Central"/>
</dbReference>
<dbReference type="GO" id="GO:0042803">
    <property type="term" value="F:protein homodimerization activity"/>
    <property type="evidence" value="ECO:0000314"/>
    <property type="project" value="EcoCyc"/>
</dbReference>
<dbReference type="GO" id="GO:0042398">
    <property type="term" value="P:modified amino acid biosynthetic process"/>
    <property type="evidence" value="ECO:0007669"/>
    <property type="project" value="InterPro"/>
</dbReference>
<dbReference type="FunFam" id="3.30.590.20:FF:000002">
    <property type="entry name" value="Putative glutamate--cysteine ligase 2"/>
    <property type="match status" value="1"/>
</dbReference>
<dbReference type="Gene3D" id="3.30.590.20">
    <property type="match status" value="1"/>
</dbReference>
<dbReference type="HAMAP" id="MF_01609">
    <property type="entry name" value="Glu_cys_ligase_2"/>
    <property type="match status" value="1"/>
</dbReference>
<dbReference type="InterPro" id="IPR050141">
    <property type="entry name" value="GCL_type2/YbdK_subfam"/>
</dbReference>
<dbReference type="InterPro" id="IPR006336">
    <property type="entry name" value="GCS2"/>
</dbReference>
<dbReference type="InterPro" id="IPR014746">
    <property type="entry name" value="Gln_synth/guanido_kin_cat_dom"/>
</dbReference>
<dbReference type="InterPro" id="IPR011793">
    <property type="entry name" value="YbdK"/>
</dbReference>
<dbReference type="NCBIfam" id="TIGR02050">
    <property type="entry name" value="gshA_cyan_rel"/>
    <property type="match status" value="1"/>
</dbReference>
<dbReference type="NCBIfam" id="NF010040">
    <property type="entry name" value="PRK13516.1"/>
    <property type="match status" value="1"/>
</dbReference>
<dbReference type="PANTHER" id="PTHR36510">
    <property type="entry name" value="GLUTAMATE--CYSTEINE LIGASE 2-RELATED"/>
    <property type="match status" value="1"/>
</dbReference>
<dbReference type="PANTHER" id="PTHR36510:SF1">
    <property type="entry name" value="GLUTAMATE--CYSTEINE LIGASE 2-RELATED"/>
    <property type="match status" value="1"/>
</dbReference>
<dbReference type="Pfam" id="PF04107">
    <property type="entry name" value="GCS2"/>
    <property type="match status" value="1"/>
</dbReference>
<dbReference type="SUPFAM" id="SSF55931">
    <property type="entry name" value="Glutamine synthetase/guanido kinase"/>
    <property type="match status" value="1"/>
</dbReference>
<comment type="function">
    <text evidence="1 2">ATP-dependent carboxylate-amine ligase which exhibits weak glutamate--cysteine ligase activity. However, because of the low catalytic rate, the question remains whether L-cysteine is the actual biological substrate.</text>
</comment>
<comment type="catalytic activity">
    <reaction evidence="1">
        <text>L-cysteine + L-glutamate + ATP = gamma-L-glutamyl-L-cysteine + ADP + phosphate + H(+)</text>
        <dbReference type="Rhea" id="RHEA:13285"/>
        <dbReference type="ChEBI" id="CHEBI:15378"/>
        <dbReference type="ChEBI" id="CHEBI:29985"/>
        <dbReference type="ChEBI" id="CHEBI:30616"/>
        <dbReference type="ChEBI" id="CHEBI:35235"/>
        <dbReference type="ChEBI" id="CHEBI:43474"/>
        <dbReference type="ChEBI" id="CHEBI:58173"/>
        <dbReference type="ChEBI" id="CHEBI:456216"/>
        <dbReference type="EC" id="6.3.2.2"/>
    </reaction>
</comment>
<comment type="subunit">
    <text evidence="1 2">Homodimer.</text>
</comment>
<comment type="miscellaneous">
    <text>Catalytic activity was tested towards all 20 common amino acids, but was only observed with L-cysteine.</text>
</comment>
<comment type="similarity">
    <text evidence="1">Belongs to the glutamate--cysteine ligase type 2 family. YbdK subfamily.</text>
</comment>
<keyword id="KW-0002">3D-structure</keyword>
<keyword id="KW-0067">ATP-binding</keyword>
<keyword id="KW-0436">Ligase</keyword>
<keyword id="KW-0547">Nucleotide-binding</keyword>
<keyword id="KW-1185">Reference proteome</keyword>
<accession>P77213</accession>
<protein>
    <recommendedName>
        <fullName evidence="1">Putative glutamate--cysteine ligase 2</fullName>
        <ecNumber evidence="1">6.3.2.2</ecNumber>
    </recommendedName>
    <alternativeName>
        <fullName evidence="1">Gamma-glutamylcysteine synthetase 2</fullName>
        <shortName evidence="1">GCS 2</shortName>
        <shortName evidence="1">Gamma-GCS 2</shortName>
    </alternativeName>
</protein>